<protein>
    <recommendedName>
        <fullName evidence="1">L-carnitine/gamma-butyrobetaine antiporter</fullName>
    </recommendedName>
</protein>
<dbReference type="EMBL" id="AM942759">
    <property type="protein sequence ID" value="CAR45230.1"/>
    <property type="molecule type" value="Genomic_DNA"/>
</dbReference>
<dbReference type="RefSeq" id="WP_012368453.1">
    <property type="nucleotide sequence ID" value="NC_010554.1"/>
</dbReference>
<dbReference type="PDB" id="2WSW">
    <property type="method" value="X-ray"/>
    <property type="resolution" value="2.29 A"/>
    <property type="chains" value="A=3-504"/>
</dbReference>
<dbReference type="PDB" id="4M8J">
    <property type="method" value="X-ray"/>
    <property type="resolution" value="3.29 A"/>
    <property type="chains" value="A=1-504"/>
</dbReference>
<dbReference type="PDBsum" id="2WSW"/>
<dbReference type="PDBsum" id="4M8J"/>
<dbReference type="SMR" id="B4EY22"/>
<dbReference type="TCDB" id="2.A.15.2.2">
    <property type="family name" value="the betaine/carnitine/choline transporter (bcct) family"/>
</dbReference>
<dbReference type="EnsemblBacteria" id="CAR45230">
    <property type="protein sequence ID" value="CAR45230"/>
    <property type="gene ID" value="PMI2654"/>
</dbReference>
<dbReference type="GeneID" id="6803117"/>
<dbReference type="KEGG" id="pmr:PMI2654"/>
<dbReference type="PATRIC" id="fig|529507.6.peg.2582"/>
<dbReference type="eggNOG" id="COG1292">
    <property type="taxonomic scope" value="Bacteria"/>
</dbReference>
<dbReference type="HOGENOM" id="CLU_010118_6_0_6"/>
<dbReference type="UniPathway" id="UPA00117"/>
<dbReference type="EvolutionaryTrace" id="B4EY22"/>
<dbReference type="Proteomes" id="UP000008319">
    <property type="component" value="Chromosome"/>
</dbReference>
<dbReference type="GO" id="GO:0005886">
    <property type="term" value="C:plasma membrane"/>
    <property type="evidence" value="ECO:0007669"/>
    <property type="project" value="UniProtKB-SubCell"/>
</dbReference>
<dbReference type="GO" id="GO:0044667">
    <property type="term" value="F:(R)-carnitine:4-(trimethylammonio)butanoate antiporter activity"/>
    <property type="evidence" value="ECO:0007669"/>
    <property type="project" value="UniProtKB-UniRule"/>
</dbReference>
<dbReference type="GO" id="GO:1900751">
    <property type="term" value="P:4-(trimethylammonio)butanoate transport"/>
    <property type="evidence" value="ECO:0007669"/>
    <property type="project" value="InterPro"/>
</dbReference>
<dbReference type="GO" id="GO:0009437">
    <property type="term" value="P:carnitine metabolic process"/>
    <property type="evidence" value="ECO:0007669"/>
    <property type="project" value="UniProtKB-UniRule"/>
</dbReference>
<dbReference type="HAMAP" id="MF_01049">
    <property type="entry name" value="CaiT"/>
    <property type="match status" value="1"/>
</dbReference>
<dbReference type="InterPro" id="IPR018093">
    <property type="entry name" value="BCCT_CS"/>
</dbReference>
<dbReference type="InterPro" id="IPR000060">
    <property type="entry name" value="BCCT_transptr"/>
</dbReference>
<dbReference type="InterPro" id="IPR023449">
    <property type="entry name" value="BCCT_transptr_CaiT"/>
</dbReference>
<dbReference type="NCBIfam" id="TIGR00842">
    <property type="entry name" value="bcct"/>
    <property type="match status" value="1"/>
</dbReference>
<dbReference type="NCBIfam" id="NF002887">
    <property type="entry name" value="PRK03356.1"/>
    <property type="match status" value="1"/>
</dbReference>
<dbReference type="PANTHER" id="PTHR30047">
    <property type="entry name" value="HIGH-AFFINITY CHOLINE TRANSPORT PROTEIN-RELATED"/>
    <property type="match status" value="1"/>
</dbReference>
<dbReference type="PANTHER" id="PTHR30047:SF11">
    <property type="entry name" value="L-CARNITINE_GAMMA-BUTYROBETAINE ANTIPORTER"/>
    <property type="match status" value="1"/>
</dbReference>
<dbReference type="Pfam" id="PF02028">
    <property type="entry name" value="BCCT"/>
    <property type="match status" value="1"/>
</dbReference>
<dbReference type="PROSITE" id="PS01303">
    <property type="entry name" value="BCCT"/>
    <property type="match status" value="1"/>
</dbReference>
<gene>
    <name evidence="1 4" type="primary">caiT</name>
    <name evidence="6" type="ordered locus">PMI2654</name>
</gene>
<comment type="function">
    <text evidence="1 2 3">Catalyzes the exchange of L-carnitine for gamma-butyrobetaine.</text>
</comment>
<comment type="catalytic activity">
    <reaction evidence="1 2 3">
        <text>4-(trimethylamino)butanoate(in) + (R)-carnitine(out) = 4-(trimethylamino)butanoate(out) + (R)-carnitine(in)</text>
        <dbReference type="Rhea" id="RHEA:29427"/>
        <dbReference type="ChEBI" id="CHEBI:16244"/>
        <dbReference type="ChEBI" id="CHEBI:16347"/>
    </reaction>
</comment>
<comment type="biophysicochemical properties">
    <kinetics>
        <KM evidence="2">46 uM for L-carnitine</KM>
        <KM evidence="3">8.5 uM for L-carnitine</KM>
        <Vmax evidence="2">4672.0 nmol/min/mg enzyme</Vmax>
        <Vmax evidence="3">5172.0 nmol/min/mg enzyme</Vmax>
        <text evidence="2 3">kcat is 263 min(-1) with L-carnitine as substrate (PubMed:20829798). kcat is 4.9 sec(-1) with L-carnitine as substrate (PubMed:24101465).</text>
    </kinetics>
    <phDependence>
        <text evidence="3">Optimum pH is 7.</text>
    </phDependence>
</comment>
<comment type="pathway">
    <text evidence="1">Amine and polyamine metabolism; carnitine metabolism.</text>
</comment>
<comment type="subunit">
    <text evidence="1 2 3">Homotrimer.</text>
</comment>
<comment type="subcellular location">
    <subcellularLocation>
        <location evidence="1 2 3">Cell inner membrane</location>
        <topology evidence="1 2 3">Multi-pass membrane protein</topology>
    </subcellularLocation>
</comment>
<comment type="similarity">
    <text evidence="1">Belongs to the BCCT transporter (TC 2.A.15) family. CaiT subfamily.</text>
</comment>
<keyword id="KW-0002">3D-structure</keyword>
<keyword id="KW-0050">Antiport</keyword>
<keyword id="KW-0997">Cell inner membrane</keyword>
<keyword id="KW-1003">Cell membrane</keyword>
<keyword id="KW-0472">Membrane</keyword>
<keyword id="KW-1185">Reference proteome</keyword>
<keyword id="KW-0812">Transmembrane</keyword>
<keyword id="KW-1133">Transmembrane helix</keyword>
<keyword id="KW-0813">Transport</keyword>
<feature type="chain" id="PRO_0000455644" description="L-carnitine/gamma-butyrobetaine antiporter">
    <location>
        <begin position="1"/>
        <end position="514"/>
    </location>
</feature>
<feature type="topological domain" description="Cytoplasmic" evidence="2 7">
    <location>
        <begin position="1"/>
        <end position="11"/>
    </location>
</feature>
<feature type="transmembrane region" description="Helical" evidence="2 7">
    <location>
        <begin position="12"/>
        <end position="30"/>
    </location>
</feature>
<feature type="topological domain" description="Periplasmic" evidence="2 7">
    <location>
        <begin position="31"/>
        <end position="42"/>
    </location>
</feature>
<feature type="transmembrane region" description="Helical" evidence="2 7">
    <location>
        <begin position="43"/>
        <end position="68"/>
    </location>
</feature>
<feature type="topological domain" description="Cytoplasmic" evidence="2 7">
    <location>
        <begin position="69"/>
        <end position="91"/>
    </location>
</feature>
<feature type="transmembrane region" description="Helical" evidence="2 7">
    <location>
        <begin position="92"/>
        <end position="112"/>
    </location>
</feature>
<feature type="topological domain" description="Periplasmic" evidence="2 7">
    <location>
        <begin position="113"/>
        <end position="131"/>
    </location>
</feature>
<feature type="transmembrane region" description="Helical" evidence="2 7">
    <location>
        <begin position="132"/>
        <end position="154"/>
    </location>
</feature>
<feature type="topological domain" description="Cytoplasmic" evidence="2 7">
    <location>
        <begin position="155"/>
        <end position="185"/>
    </location>
</feature>
<feature type="transmembrane region" description="Helical" evidence="2 7">
    <location>
        <begin position="186"/>
        <end position="216"/>
    </location>
</feature>
<feature type="topological domain" description="Periplasmic" evidence="2 7">
    <location>
        <begin position="217"/>
        <end position="230"/>
    </location>
</feature>
<feature type="transmembrane region" description="Helical" evidence="2 7">
    <location>
        <begin position="231"/>
        <end position="249"/>
    </location>
</feature>
<feature type="topological domain" description="Cytoplasmic" evidence="2 7">
    <location>
        <begin position="250"/>
        <end position="251"/>
    </location>
</feature>
<feature type="transmembrane region" description="Helical" evidence="2 7">
    <location>
        <begin position="252"/>
        <end position="277"/>
    </location>
</feature>
<feature type="topological domain" description="Periplasmic" evidence="2 7">
    <location>
        <begin position="278"/>
        <end position="311"/>
    </location>
</feature>
<feature type="transmembrane region" description="Helical" evidence="2 7">
    <location>
        <begin position="312"/>
        <end position="335"/>
    </location>
</feature>
<feature type="topological domain" description="Cytoplasmic" evidence="2 7">
    <location>
        <begin position="336"/>
        <end position="347"/>
    </location>
</feature>
<feature type="transmembrane region" description="Helical" evidence="2 7">
    <location>
        <begin position="348"/>
        <end position="369"/>
    </location>
</feature>
<feature type="topological domain" description="Periplasmic" evidence="2 7">
    <location>
        <begin position="370"/>
        <end position="404"/>
    </location>
</feature>
<feature type="transmembrane region" description="Helical" evidence="2 7">
    <location>
        <begin position="405"/>
        <end position="434"/>
    </location>
</feature>
<feature type="topological domain" description="Cytoplasmic" evidence="2 7">
    <location>
        <begin position="435"/>
        <end position="445"/>
    </location>
</feature>
<feature type="transmembrane region" description="Helical" evidence="2 7">
    <location>
        <begin position="446"/>
        <end position="464"/>
    </location>
</feature>
<feature type="topological domain" description="Periplasmic" evidence="2 7">
    <location>
        <begin position="465"/>
        <end position="468"/>
    </location>
</feature>
<feature type="transmembrane region" description="Helical" evidence="2 7">
    <location>
        <begin position="469"/>
        <end position="492"/>
    </location>
</feature>
<feature type="topological domain" description="Cytoplasmic" evidence="2 7">
    <location>
        <begin position="493"/>
        <end position="514"/>
    </location>
</feature>
<feature type="site" description="Important for substrate binding and transport mechanism" evidence="5">
    <location>
        <position position="262"/>
    </location>
</feature>
<feature type="mutagenesis site" description="Abolishes transport activity." evidence="2">
    <original>E</original>
    <variation>A</variation>
    <location>
        <position position="111"/>
    </location>
</feature>
<feature type="mutagenesis site" description="Strong decrease in L-carnitine transport. Mutant is Na(+)-dependent for substrate binding and transport." evidence="3">
    <original>R</original>
    <variation>A</variation>
    <variation>E</variation>
    <location>
        <position position="262"/>
    </location>
</feature>
<feature type="mutagenesis site" description="2.5-fold decrease in Vmax." evidence="2">
    <original>W</original>
    <variation>A</variation>
    <location>
        <position position="316"/>
    </location>
</feature>
<feature type="mutagenesis site" description="10-fold decrease in Vmax." evidence="2">
    <original>M</original>
    <variation>V</variation>
    <location>
        <position position="331"/>
    </location>
</feature>
<feature type="helix" evidence="9">
    <location>
        <begin position="12"/>
        <end position="31"/>
    </location>
</feature>
<feature type="helix" evidence="9">
    <location>
        <begin position="33"/>
        <end position="71"/>
    </location>
</feature>
<feature type="turn" evidence="9">
    <location>
        <begin position="73"/>
        <end position="76"/>
    </location>
</feature>
<feature type="strand" evidence="9">
    <location>
        <begin position="78"/>
        <end position="82"/>
    </location>
</feature>
<feature type="helix" evidence="9">
    <location>
        <begin position="88"/>
        <end position="98"/>
    </location>
</feature>
<feature type="helix" evidence="9">
    <location>
        <begin position="102"/>
        <end position="117"/>
    </location>
</feature>
<feature type="helix" evidence="9">
    <location>
        <begin position="128"/>
        <end position="141"/>
    </location>
</feature>
<feature type="helix" evidence="9">
    <location>
        <begin position="144"/>
        <end position="148"/>
    </location>
</feature>
<feature type="helix" evidence="9">
    <location>
        <begin position="151"/>
        <end position="162"/>
    </location>
</feature>
<feature type="helix" evidence="9">
    <location>
        <begin position="171"/>
        <end position="174"/>
    </location>
</feature>
<feature type="helix" evidence="9">
    <location>
        <begin position="176"/>
        <end position="185"/>
    </location>
</feature>
<feature type="helix" evidence="9">
    <location>
        <begin position="187"/>
        <end position="223"/>
    </location>
</feature>
<feature type="helix" evidence="9">
    <location>
        <begin position="229"/>
        <end position="248"/>
    </location>
</feature>
<feature type="helix" evidence="9">
    <location>
        <begin position="252"/>
        <end position="277"/>
    </location>
</feature>
<feature type="helix" evidence="9">
    <location>
        <begin position="279"/>
        <end position="301"/>
    </location>
</feature>
<feature type="turn" evidence="9">
    <location>
        <begin position="306"/>
        <end position="308"/>
    </location>
</feature>
<feature type="helix" evidence="9">
    <location>
        <begin position="312"/>
        <end position="315"/>
    </location>
</feature>
<feature type="helix" evidence="9">
    <location>
        <begin position="317"/>
        <end position="326"/>
    </location>
</feature>
<feature type="helix" evidence="9">
    <location>
        <begin position="328"/>
        <end position="337"/>
    </location>
</feature>
<feature type="turn" evidence="9">
    <location>
        <begin position="338"/>
        <end position="341"/>
    </location>
</feature>
<feature type="helix" evidence="9">
    <location>
        <begin position="344"/>
        <end position="375"/>
    </location>
</feature>
<feature type="helix" evidence="9">
    <location>
        <begin position="381"/>
        <end position="388"/>
    </location>
</feature>
<feature type="helix" evidence="9">
    <location>
        <begin position="390"/>
        <end position="399"/>
    </location>
</feature>
<feature type="strand" evidence="9">
    <location>
        <begin position="401"/>
        <end position="403"/>
    </location>
</feature>
<feature type="helix" evidence="9">
    <location>
        <begin position="404"/>
        <end position="434"/>
    </location>
</feature>
<feature type="helix" evidence="9">
    <location>
        <begin position="446"/>
        <end position="466"/>
    </location>
</feature>
<feature type="helix" evidence="9">
    <location>
        <begin position="470"/>
        <end position="501"/>
    </location>
</feature>
<proteinExistence type="evidence at protein level"/>
<reference key="1">
    <citation type="journal article" date="2008" name="J. Bacteriol.">
        <title>Complete genome sequence of uropathogenic Proteus mirabilis, a master of both adherence and motility.</title>
        <authorList>
            <person name="Pearson M.M."/>
            <person name="Sebaihia M."/>
            <person name="Churcher C."/>
            <person name="Quail M.A."/>
            <person name="Seshasayee A.S."/>
            <person name="Luscombe N.M."/>
            <person name="Abdellah Z."/>
            <person name="Arrosmith C."/>
            <person name="Atkin B."/>
            <person name="Chillingworth T."/>
            <person name="Hauser H."/>
            <person name="Jagels K."/>
            <person name="Moule S."/>
            <person name="Mungall K."/>
            <person name="Norbertczak H."/>
            <person name="Rabbinowitsch E."/>
            <person name="Walker D."/>
            <person name="Whithead S."/>
            <person name="Thomson N.R."/>
            <person name="Rather P.N."/>
            <person name="Parkhill J."/>
            <person name="Mobley H.L.T."/>
        </authorList>
    </citation>
    <scope>NUCLEOTIDE SEQUENCE [LARGE SCALE GENOMIC DNA]</scope>
    <source>
        <strain>HI4320</strain>
    </source>
</reference>
<reference evidence="7" key="2">
    <citation type="journal article" date="2010" name="Nature">
        <title>Structural basis of Na(+)-independent and cooperative substrate/product antiport in CaiT.</title>
        <authorList>
            <person name="Schulze S."/>
            <person name="Koster S."/>
            <person name="Geldmacher U."/>
            <person name="Terwisscha van Scheltinga A.C."/>
            <person name="Kuhlbrandt W."/>
        </authorList>
    </citation>
    <scope>X-RAY CRYSTALLOGRAPHY (2.29 ANGSTROMS) OF 3-504</scope>
    <scope>FUNCTION</scope>
    <scope>CATALYTIC ACTIVITY</scope>
    <scope>BIOPHYSICOCHEMICAL PROPERTIES</scope>
    <scope>SUBUNIT</scope>
    <scope>SUBCELLULAR LOCATION</scope>
    <scope>TOPOLOGY</scope>
    <scope>MUTAGENESIS OF GLU-111; TRP-316 AND MET-331</scope>
</reference>
<reference evidence="8" key="3">
    <citation type="journal article" date="2013" name="Proc. Natl. Acad. Sci. U.S.A.">
        <title>Arginine oscillation explains Na+ independence in the substrate/product antiporter CaiT.</title>
        <authorList>
            <person name="Kalayil S."/>
            <person name="Schulze S."/>
            <person name="Kuhlbrandt W."/>
        </authorList>
    </citation>
    <scope>X-RAY CRYSTALLOGRAPHY (3.29 ANGSTROMS) OF 1-504 OF MUTANT GLU-262</scope>
    <scope>FUNCTION</scope>
    <scope>CATALYTIC ACTIVITY</scope>
    <scope>BIOPHYSICOCHEMICAL PROPERTIES</scope>
    <scope>SUBUNIT</scope>
    <scope>SUBCELLULAR LOCATION</scope>
    <scope>TOPOLOGY</scope>
    <scope>MUTAGENESIS OF ARG-262</scope>
</reference>
<evidence type="ECO:0000255" key="1">
    <source>
        <dbReference type="HAMAP-Rule" id="MF_01049"/>
    </source>
</evidence>
<evidence type="ECO:0000269" key="2">
    <source>
    </source>
</evidence>
<evidence type="ECO:0000269" key="3">
    <source>
    </source>
</evidence>
<evidence type="ECO:0000303" key="4">
    <source>
    </source>
</evidence>
<evidence type="ECO:0000305" key="5">
    <source>
    </source>
</evidence>
<evidence type="ECO:0000312" key="6">
    <source>
        <dbReference type="EMBL" id="CAR45230.1"/>
    </source>
</evidence>
<evidence type="ECO:0007744" key="7">
    <source>
        <dbReference type="PDB" id="2WSW"/>
    </source>
</evidence>
<evidence type="ECO:0007744" key="8">
    <source>
        <dbReference type="PDB" id="4M8J"/>
    </source>
</evidence>
<evidence type="ECO:0007829" key="9">
    <source>
        <dbReference type="PDB" id="2WSW"/>
    </source>
</evidence>
<organism>
    <name type="scientific">Proteus mirabilis (strain HI4320)</name>
    <dbReference type="NCBI Taxonomy" id="529507"/>
    <lineage>
        <taxon>Bacteria</taxon>
        <taxon>Pseudomonadati</taxon>
        <taxon>Pseudomonadota</taxon>
        <taxon>Gammaproteobacteria</taxon>
        <taxon>Enterobacterales</taxon>
        <taxon>Morganellaceae</taxon>
        <taxon>Proteus</taxon>
    </lineage>
</organism>
<name>CAIT_PROMH</name>
<sequence>MSKDNKKAGIEPKVFFPPLIIVGILCWLTVRDLDASNEVINAVFSYVTNVWGWAFEWYMVIMFGGWFWLVFGRYAKKRLGDEKPEFSTASWIFMMFASCTSAAVLFWGSIEIYYYISSPPFGMEGYSAPAKEIGLAYSLFHWGPLPWATYSFLSVAFAYFFFVRKMEVIRPSSTLTPLVGEKHVNGLFGTVVDNFYLVALILAMGTSLGLATPLVTECIQYLFGIPHTLQLDAIIISCWILLNAICVAFGLQKGVKIASDVRTYLSFLMLGWVFIVGGASFIVNYFTDSVGTLLMYMPRMLFYTDPIGKGGFPQAWTVFYWAWWVIYAIQMSIFLARISKGRTVRELCLGMVSGLTAGTWLIWTILGGNTLQLIDQNILNIPQLIDQYGVPRAIIETWAALPLSTATMWGFFILCFIATVTLINACSYTLAMSTCRSMKEGAEPPLLVRIGWSVLVGIIGIILLALGGLKPIQTAIIAGGCPLFFVNIMVTLSFIKDAKVHWKDCSPYTQKMTH</sequence>
<accession>B4EY22</accession>